<reference key="1">
    <citation type="submission" date="2006-11" db="EMBL/GenBank/DDBJ databases">
        <title>Molecular and functional characterization of human CD300d, a novel receptor expressed by myeloid cells.</title>
        <authorList>
            <person name="Martinez-Barriocanal A."/>
            <person name="Sayos J."/>
        </authorList>
    </citation>
    <scope>NUCLEOTIDE SEQUENCE [MRNA]</scope>
</reference>
<reference key="2">
    <citation type="journal article" date="2003" name="Genome Res.">
        <title>The secreted protein discovery initiative (SPDI), a large-scale effort to identify novel human secreted and transmembrane proteins: a bioinformatics assessment.</title>
        <authorList>
            <person name="Clark H.F."/>
            <person name="Gurney A.L."/>
            <person name="Abaya E."/>
            <person name="Baker K."/>
            <person name="Baldwin D.T."/>
            <person name="Brush J."/>
            <person name="Chen J."/>
            <person name="Chow B."/>
            <person name="Chui C."/>
            <person name="Crowley C."/>
            <person name="Currell B."/>
            <person name="Deuel B."/>
            <person name="Dowd P."/>
            <person name="Eaton D."/>
            <person name="Foster J.S."/>
            <person name="Grimaldi C."/>
            <person name="Gu Q."/>
            <person name="Hass P.E."/>
            <person name="Heldens S."/>
            <person name="Huang A."/>
            <person name="Kim H.S."/>
            <person name="Klimowski L."/>
            <person name="Jin Y."/>
            <person name="Johnson S."/>
            <person name="Lee J."/>
            <person name="Lewis L."/>
            <person name="Liao D."/>
            <person name="Mark M.R."/>
            <person name="Robbie E."/>
            <person name="Sanchez C."/>
            <person name="Schoenfeld J."/>
            <person name="Seshagiri S."/>
            <person name="Simmons L."/>
            <person name="Singh J."/>
            <person name="Smith V."/>
            <person name="Stinson J."/>
            <person name="Vagts A."/>
            <person name="Vandlen R.L."/>
            <person name="Watanabe C."/>
            <person name="Wieand D."/>
            <person name="Woods K."/>
            <person name="Xie M.-H."/>
            <person name="Yansura D.G."/>
            <person name="Yi S."/>
            <person name="Yu G."/>
            <person name="Yuan J."/>
            <person name="Zhang M."/>
            <person name="Zhang Z."/>
            <person name="Goddard A.D."/>
            <person name="Wood W.I."/>
            <person name="Godowski P.J."/>
            <person name="Gray A.M."/>
        </authorList>
    </citation>
    <scope>NUCLEOTIDE SEQUENCE [LARGE SCALE MRNA]</scope>
</reference>
<reference key="3">
    <citation type="journal article" date="2012" name="J. Biol. Chem.">
        <title>Cloning and characterization of CD300d, a novel member of the human CD300 family of immune receptors.</title>
        <authorList>
            <person name="Comas-Casellas E."/>
            <person name="Martinez-Barriocanal A."/>
            <person name="Miro F."/>
            <person name="Ejarque-Ortiz A."/>
            <person name="Schwartz S. Jr."/>
            <person name="Martin M."/>
            <person name="Sayos J."/>
        </authorList>
    </citation>
    <scope>NUCLEOTIDE SEQUENCE [MRNA]</scope>
    <scope>SUBCELLULAR LOCATION</scope>
    <scope>SUBUNIT</scope>
    <scope>TISSUE SPECIFICITY</scope>
    <scope>GLYCOSYLATION</scope>
    <scope>MUTAGENESIS OF ARG-158</scope>
    <source>
        <tissue>Peripheral blood monocyte</tissue>
    </source>
</reference>
<reference key="4">
    <citation type="journal article" date="2003" name="Hum. Genet.">
        <title>Novel immunoglobulin superfamily gene cluster, mapping to a region of human chromosome 17q25, linked to psoriasis susceptibility.</title>
        <authorList>
            <person name="Speckman R.A."/>
            <person name="Wright Daw J.A."/>
            <person name="Helms C."/>
            <person name="Duan S."/>
            <person name="Cao L."/>
            <person name="Taillon-Miller P."/>
            <person name="Kwok P.Y."/>
            <person name="Menter A."/>
            <person name="Bowcock A.M."/>
        </authorList>
    </citation>
    <scope>IDENTIFICATION</scope>
</reference>
<keyword id="KW-1003">Cell membrane</keyword>
<keyword id="KW-1015">Disulfide bond</keyword>
<keyword id="KW-0325">Glycoprotein</keyword>
<keyword id="KW-0391">Immunity</keyword>
<keyword id="KW-0393">Immunoglobulin domain</keyword>
<keyword id="KW-0472">Membrane</keyword>
<keyword id="KW-0675">Receptor</keyword>
<keyword id="KW-1185">Reference proteome</keyword>
<keyword id="KW-0732">Signal</keyword>
<keyword id="KW-0812">Transmembrane</keyword>
<keyword id="KW-1133">Transmembrane helix</keyword>
<protein>
    <recommendedName>
        <fullName evidence="1">CMRF35-like molecule 5</fullName>
        <shortName evidence="1">CLM-5</shortName>
    </recommendedName>
    <alternativeName>
        <fullName>CD300 antigen-like family member D</fullName>
    </alternativeName>
    <alternativeName>
        <fullName>CMRF35-A4</fullName>
    </alternativeName>
    <cdAntigenName>CD300d</cdAntigenName>
</protein>
<gene>
    <name type="primary">CD300LD</name>
    <name evidence="6 7" type="synonym">CD300D</name>
    <name evidence="5" type="synonym">CMRF35A4</name>
    <name type="ORF">UNQ9218/PRO28686</name>
</gene>
<accession>Q6UXZ3</accession>
<feature type="signal peptide" evidence="2">
    <location>
        <begin position="1"/>
        <end position="18"/>
    </location>
</feature>
<feature type="chain" id="PRO_0000320126" description="CMRF35-like molecule 5">
    <location>
        <begin position="19"/>
        <end position="194"/>
    </location>
</feature>
<feature type="topological domain" description="Extracellular" evidence="2">
    <location>
        <begin position="19"/>
        <end position="165"/>
    </location>
</feature>
<feature type="transmembrane region" description="Helical" evidence="2">
    <location>
        <begin position="166"/>
        <end position="186"/>
    </location>
</feature>
<feature type="topological domain" description="Cytoplasmic" evidence="2">
    <location>
        <begin position="187"/>
        <end position="194"/>
    </location>
</feature>
<feature type="domain" description="Ig-like V-type">
    <location>
        <begin position="19"/>
        <end position="125"/>
    </location>
</feature>
<feature type="glycosylation site" description="N-linked (GlcNAc...) asparagine" evidence="2">
    <location>
        <position position="28"/>
    </location>
</feature>
<feature type="disulfide bond" evidence="3">
    <location>
        <begin position="39"/>
        <end position="107"/>
    </location>
</feature>
<feature type="sequence variant" id="VAR_059386" description="In dbSNP:rs493430.">
    <original>S</original>
    <variation>A</variation>
    <location>
        <position position="6"/>
    </location>
</feature>
<feature type="sequence variant" id="VAR_059387" description="In dbSNP:rs783239.">
    <original>V</original>
    <variation>M</variation>
    <location>
        <position position="89"/>
    </location>
</feature>
<feature type="mutagenesis site" description="Unable to reach the cell surface upon transfection." evidence="4">
    <original>R</original>
    <variation>S</variation>
    <location>
        <position position="158"/>
    </location>
</feature>
<name>CLM5_HUMAN</name>
<comment type="subunit">
    <text evidence="4">Forms complexes with the CD300 family members with exception of CD300c.</text>
</comment>
<comment type="interaction">
    <interactant intactId="EBI-4314468">
        <id>Q6UXZ3</id>
    </interactant>
    <interactant intactId="EBI-26499879">
        <id>A8K4G0</id>
        <label>CD300LB</label>
    </interactant>
    <organismsDiffer>false</organismsDiffer>
    <experiments>2</experiments>
</comment>
<comment type="interaction">
    <interactant intactId="EBI-4314468">
        <id>Q6UXZ3</id>
    </interactant>
    <interactant intactId="EBI-743871">
        <id>P04155</id>
        <label>TFF1</label>
    </interactant>
    <organismsDiffer>false</organismsDiffer>
    <experiments>3</experiments>
</comment>
<comment type="subcellular location">
    <subcellularLocation>
        <location evidence="4">Cell membrane</location>
        <topology evidence="4">Single-pass type I membrane protein</topology>
    </subcellularLocation>
    <text>Cell surface localization requires the ITAM-bearing Fc receptor FCER1G to overcome ER retention.</text>
</comment>
<comment type="tissue specificity">
    <text evidence="4">Expression seems restricted to cells of myeloid lineage.</text>
</comment>
<comment type="PTM">
    <text evidence="4">N-glycosylated.</text>
</comment>
<comment type="similarity">
    <text evidence="8">Belongs to the CD300 family.</text>
</comment>
<proteinExistence type="evidence at protein level"/>
<sequence>MWLSPSLLLLILPGYSIAAKITGPTTVNGSEQGSLTVQCAYGSGWETYLKWRCQGADWNYCNILVKTNGSEQEVKKNRVSIRDNQKNHVFTVTMENLKRDDADSYWCGTERPGIDLGVKVQVTINPGTQTAVSEWTTTTASLAFTAAATQKTSSPLTRSPLKSTHFLFLFLLELPLLLSMLGTVLWVNRPQRRS</sequence>
<dbReference type="EMBL" id="EF137868">
    <property type="protein sequence ID" value="ABM30606.1"/>
    <property type="molecule type" value="mRNA"/>
</dbReference>
<dbReference type="EMBL" id="AY358148">
    <property type="protein sequence ID" value="AAQ88515.1"/>
    <property type="molecule type" value="mRNA"/>
</dbReference>
<dbReference type="CCDS" id="CCDS42379.1"/>
<dbReference type="RefSeq" id="NP_001108624.1">
    <property type="nucleotide sequence ID" value="NM_001115152.2"/>
</dbReference>
<dbReference type="SMR" id="Q6UXZ3"/>
<dbReference type="BioGRID" id="137769">
    <property type="interactions" value="2"/>
</dbReference>
<dbReference type="FunCoup" id="Q6UXZ3">
    <property type="interactions" value="773"/>
</dbReference>
<dbReference type="IntAct" id="Q6UXZ3">
    <property type="interactions" value="8"/>
</dbReference>
<dbReference type="STRING" id="9606.ENSP00000364501"/>
<dbReference type="GlyCosmos" id="Q6UXZ3">
    <property type="glycosylation" value="1 site, No reported glycans"/>
</dbReference>
<dbReference type="GlyGen" id="Q6UXZ3">
    <property type="glycosylation" value="1 site"/>
</dbReference>
<dbReference type="iPTMnet" id="Q6UXZ3"/>
<dbReference type="PhosphoSitePlus" id="Q6UXZ3"/>
<dbReference type="BioMuta" id="CD300LD"/>
<dbReference type="DMDM" id="74758584"/>
<dbReference type="MassIVE" id="Q6UXZ3"/>
<dbReference type="PaxDb" id="9606-ENSP00000364501"/>
<dbReference type="PeptideAtlas" id="Q6UXZ3"/>
<dbReference type="Antibodypedia" id="31991">
    <property type="antibodies" value="32 antibodies from 16 providers"/>
</dbReference>
<dbReference type="DNASU" id="100131439"/>
<dbReference type="Ensembl" id="ENST00000375352.1">
    <property type="protein sequence ID" value="ENSP00000364501.1"/>
    <property type="gene ID" value="ENSG00000204345.1"/>
</dbReference>
<dbReference type="Ensembl" id="ENST00000709212.1">
    <property type="protein sequence ID" value="ENSP00000517559.1"/>
    <property type="gene ID" value="ENSG00000291922.1"/>
</dbReference>
<dbReference type="GeneID" id="100131439"/>
<dbReference type="KEGG" id="hsa:100131439"/>
<dbReference type="MANE-Select" id="ENST00000375352.1">
    <property type="protein sequence ID" value="ENSP00000364501.1"/>
    <property type="RefSeq nucleotide sequence ID" value="NM_001115152.2"/>
    <property type="RefSeq protein sequence ID" value="NP_001108624.1"/>
</dbReference>
<dbReference type="UCSC" id="uc002jkz.3">
    <property type="organism name" value="human"/>
</dbReference>
<dbReference type="AGR" id="HGNC:16848"/>
<dbReference type="CTD" id="100131439"/>
<dbReference type="GeneCards" id="CD300LD"/>
<dbReference type="HGNC" id="HGNC:16848">
    <property type="gene designation" value="CD300LD"/>
</dbReference>
<dbReference type="HPA" id="ENSG00000204345">
    <property type="expression patterns" value="Not detected"/>
</dbReference>
<dbReference type="MIM" id="616301">
    <property type="type" value="gene"/>
</dbReference>
<dbReference type="neXtProt" id="NX_Q6UXZ3"/>
<dbReference type="OpenTargets" id="ENSG00000204345"/>
<dbReference type="PharmGKB" id="PA162382124"/>
<dbReference type="VEuPathDB" id="HostDB:ENSG00000204345"/>
<dbReference type="eggNOG" id="ENOG502SU7J">
    <property type="taxonomic scope" value="Eukaryota"/>
</dbReference>
<dbReference type="GeneTree" id="ENSGT00940000164782"/>
<dbReference type="HOGENOM" id="CLU_051023_3_1_1"/>
<dbReference type="InParanoid" id="Q6UXZ3"/>
<dbReference type="OMA" id="DWNYCNI"/>
<dbReference type="OrthoDB" id="8920197at2759"/>
<dbReference type="PAN-GO" id="Q6UXZ3">
    <property type="GO annotations" value="2 GO annotations based on evolutionary models"/>
</dbReference>
<dbReference type="PhylomeDB" id="Q6UXZ3"/>
<dbReference type="TreeFam" id="TF334441"/>
<dbReference type="PathwayCommons" id="Q6UXZ3"/>
<dbReference type="Reactome" id="R-HSA-198933">
    <property type="pathway name" value="Immunoregulatory interactions between a Lymphoid and a non-Lymphoid cell"/>
</dbReference>
<dbReference type="SignaLink" id="Q6UXZ3"/>
<dbReference type="BioGRID-ORCS" id="100131439">
    <property type="hits" value="13 hits in 1149 CRISPR screens"/>
</dbReference>
<dbReference type="GenomeRNAi" id="100131439"/>
<dbReference type="Pharos" id="Q6UXZ3">
    <property type="development level" value="Tdark"/>
</dbReference>
<dbReference type="PRO" id="PR:Q6UXZ3"/>
<dbReference type="Proteomes" id="UP000005640">
    <property type="component" value="Chromosome 17"/>
</dbReference>
<dbReference type="RNAct" id="Q6UXZ3">
    <property type="molecule type" value="protein"/>
</dbReference>
<dbReference type="Bgee" id="ENSG00000204345">
    <property type="expression patterns" value="Expressed in blood and 8 other cell types or tissues"/>
</dbReference>
<dbReference type="GO" id="GO:0005886">
    <property type="term" value="C:plasma membrane"/>
    <property type="evidence" value="ECO:0000318"/>
    <property type="project" value="GO_Central"/>
</dbReference>
<dbReference type="GO" id="GO:0004888">
    <property type="term" value="F:transmembrane signaling receptor activity"/>
    <property type="evidence" value="ECO:0000318"/>
    <property type="project" value="GO_Central"/>
</dbReference>
<dbReference type="GO" id="GO:0002757">
    <property type="term" value="P:immune response-activating signaling pathway"/>
    <property type="evidence" value="ECO:0000318"/>
    <property type="project" value="GO_Central"/>
</dbReference>
<dbReference type="CDD" id="cd05716">
    <property type="entry name" value="IgV_pIgR_like"/>
    <property type="match status" value="1"/>
</dbReference>
<dbReference type="FunFam" id="2.60.40.10:FF:000370">
    <property type="entry name" value="CMRF35-like molecule 1"/>
    <property type="match status" value="1"/>
</dbReference>
<dbReference type="Gene3D" id="2.60.40.10">
    <property type="entry name" value="Immunoglobulins"/>
    <property type="match status" value="1"/>
</dbReference>
<dbReference type="InterPro" id="IPR050671">
    <property type="entry name" value="CD300_family_receptors"/>
</dbReference>
<dbReference type="InterPro" id="IPR007110">
    <property type="entry name" value="Ig-like_dom"/>
</dbReference>
<dbReference type="InterPro" id="IPR036179">
    <property type="entry name" value="Ig-like_dom_sf"/>
</dbReference>
<dbReference type="InterPro" id="IPR013783">
    <property type="entry name" value="Ig-like_fold"/>
</dbReference>
<dbReference type="InterPro" id="IPR003599">
    <property type="entry name" value="Ig_sub"/>
</dbReference>
<dbReference type="InterPro" id="IPR013106">
    <property type="entry name" value="Ig_V-set"/>
</dbReference>
<dbReference type="PANTHER" id="PTHR11860:SF108">
    <property type="entry name" value="CMRF35-LIKE MOLECULE 5"/>
    <property type="match status" value="1"/>
</dbReference>
<dbReference type="PANTHER" id="PTHR11860">
    <property type="entry name" value="POLYMERIC-IMMUNOGLOBULIN RECEPTOR"/>
    <property type="match status" value="1"/>
</dbReference>
<dbReference type="Pfam" id="PF07686">
    <property type="entry name" value="V-set"/>
    <property type="match status" value="1"/>
</dbReference>
<dbReference type="SMART" id="SM00409">
    <property type="entry name" value="IG"/>
    <property type="match status" value="1"/>
</dbReference>
<dbReference type="SUPFAM" id="SSF48726">
    <property type="entry name" value="Immunoglobulin"/>
    <property type="match status" value="1"/>
</dbReference>
<dbReference type="PROSITE" id="PS50835">
    <property type="entry name" value="IG_LIKE"/>
    <property type="match status" value="1"/>
</dbReference>
<evidence type="ECO:0000250" key="1">
    <source>
        <dbReference type="UniProtKB" id="Q8VCH2"/>
    </source>
</evidence>
<evidence type="ECO:0000255" key="2"/>
<evidence type="ECO:0000255" key="3">
    <source>
        <dbReference type="PROSITE-ProRule" id="PRU00114"/>
    </source>
</evidence>
<evidence type="ECO:0000269" key="4">
    <source>
    </source>
</evidence>
<evidence type="ECO:0000303" key="5">
    <source>
    </source>
</evidence>
<evidence type="ECO:0000303" key="6">
    <source>
    </source>
</evidence>
<evidence type="ECO:0000303" key="7">
    <source ref="1"/>
</evidence>
<evidence type="ECO:0000305" key="8"/>
<organism>
    <name type="scientific">Homo sapiens</name>
    <name type="common">Human</name>
    <dbReference type="NCBI Taxonomy" id="9606"/>
    <lineage>
        <taxon>Eukaryota</taxon>
        <taxon>Metazoa</taxon>
        <taxon>Chordata</taxon>
        <taxon>Craniata</taxon>
        <taxon>Vertebrata</taxon>
        <taxon>Euteleostomi</taxon>
        <taxon>Mammalia</taxon>
        <taxon>Eutheria</taxon>
        <taxon>Euarchontoglires</taxon>
        <taxon>Primates</taxon>
        <taxon>Haplorrhini</taxon>
        <taxon>Catarrhini</taxon>
        <taxon>Hominidae</taxon>
        <taxon>Homo</taxon>
    </lineage>
</organism>